<gene>
    <name evidence="1" type="primary">mnmC</name>
    <name type="ordered locus">CHAB381_1277</name>
</gene>
<proteinExistence type="inferred from homology"/>
<accession>A7I2T7</accession>
<evidence type="ECO:0000255" key="1">
    <source>
        <dbReference type="HAMAP-Rule" id="MF_01102"/>
    </source>
</evidence>
<keyword id="KW-0963">Cytoplasm</keyword>
<keyword id="KW-0274">FAD</keyword>
<keyword id="KW-0285">Flavoprotein</keyword>
<keyword id="KW-0489">Methyltransferase</keyword>
<keyword id="KW-0511">Multifunctional enzyme</keyword>
<keyword id="KW-0560">Oxidoreductase</keyword>
<keyword id="KW-1185">Reference proteome</keyword>
<keyword id="KW-0949">S-adenosyl-L-methionine</keyword>
<keyword id="KW-0808">Transferase</keyword>
<keyword id="KW-0819">tRNA processing</keyword>
<sequence length="667" mass="75913">MKFINGILFNENFKDFYSNFKNPFGESEFVFGSAVNEILKTQNRVIVAELGFGLGRNFLNIAAKFKNSDKILHFVSIEKFPLQKEILAKFYENFKFEGAKKLLKLYPTLESGFHRIKFSKNITLDLLFGDAECVLKECEFKADIWLMDGFSPSKNPDMWSDEITSQIARLCRIKAKIATYSASKKVQKSLENAGFCVVKTPGFNGKREMIRAYFNGNSGEIKDYFFERPSFKSGKNVLIIGAGIAGIVTAIKFQNLGYKTVIAEKACSVAANASGNFCGVLEPLITKKGVKLGEMHKYAFKMAVKFYKKNVPKNLAKFCGAKEFAYNDDILKRFETHDKSEIFDFNRKDLPYASIFIKNAALLRPRKICEFFSKKLNIKFGYEFSDFVESNGGYIVNFVGKKPLKCDILIFAMGSESEELFGGGKNVRANFDDAMQISSVRGQITLLRPFLKTPIPLGARGYICPKIGKRQLIGATYDRKDYENQARTFDDERNLQNVAELLNKNFVKNTDTRNLNDKKFKFEILDKNVDFNVSKQNLNFKMHTQNKELAFKNQILNVKILGSRVGFRGYSGDRFPLIGALPDCEYFKEKYKILPWQKNRAKNLPPKYLKNIYINTSHGARGLCTAILGAEILADLVTNRPFCLPKSLINELAPSRFLIRKLKKGLK</sequence>
<name>MNMC_CAMHC</name>
<feature type="chain" id="PRO_0000347969" description="tRNA 5-methylaminomethyl-2-thiouridine biosynthesis bifunctional protein MnmC">
    <location>
        <begin position="1"/>
        <end position="667"/>
    </location>
</feature>
<feature type="region of interest" description="tRNA (mnm(5)s(2)U34)-methyltransferase">
    <location>
        <begin position="1"/>
        <end position="215"/>
    </location>
</feature>
<feature type="region of interest" description="FAD-dependent cmnm(5)s(2)U34 oxidoreductase">
    <location>
        <begin position="240"/>
        <end position="667"/>
    </location>
</feature>
<dbReference type="EC" id="2.1.1.61" evidence="1"/>
<dbReference type="EC" id="1.5.-.-" evidence="1"/>
<dbReference type="EMBL" id="CP000776">
    <property type="protein sequence ID" value="ABS51710.1"/>
    <property type="molecule type" value="Genomic_DNA"/>
</dbReference>
<dbReference type="RefSeq" id="WP_012109129.1">
    <property type="nucleotide sequence ID" value="NC_009714.1"/>
</dbReference>
<dbReference type="SMR" id="A7I2T7"/>
<dbReference type="STRING" id="360107.CHAB381_1277"/>
<dbReference type="KEGG" id="cha:CHAB381_1277"/>
<dbReference type="eggNOG" id="COG0665">
    <property type="taxonomic scope" value="Bacteria"/>
</dbReference>
<dbReference type="eggNOG" id="COG4121">
    <property type="taxonomic scope" value="Bacteria"/>
</dbReference>
<dbReference type="HOGENOM" id="CLU_022427_2_1_7"/>
<dbReference type="OrthoDB" id="9786494at2"/>
<dbReference type="Proteomes" id="UP000002407">
    <property type="component" value="Chromosome"/>
</dbReference>
<dbReference type="GO" id="GO:0005737">
    <property type="term" value="C:cytoplasm"/>
    <property type="evidence" value="ECO:0007669"/>
    <property type="project" value="UniProtKB-SubCell"/>
</dbReference>
<dbReference type="GO" id="GO:0016645">
    <property type="term" value="F:oxidoreductase activity, acting on the CH-NH group of donors"/>
    <property type="evidence" value="ECO:0007669"/>
    <property type="project" value="InterPro"/>
</dbReference>
<dbReference type="GO" id="GO:0004808">
    <property type="term" value="F:tRNA (5-methylaminomethyl-2-thiouridylate)(34)-methyltransferase activity"/>
    <property type="evidence" value="ECO:0007669"/>
    <property type="project" value="UniProtKB-EC"/>
</dbReference>
<dbReference type="GO" id="GO:0032259">
    <property type="term" value="P:methylation"/>
    <property type="evidence" value="ECO:0007669"/>
    <property type="project" value="UniProtKB-KW"/>
</dbReference>
<dbReference type="GO" id="GO:0008033">
    <property type="term" value="P:tRNA processing"/>
    <property type="evidence" value="ECO:0007669"/>
    <property type="project" value="UniProtKB-KW"/>
</dbReference>
<dbReference type="Gene3D" id="3.50.50.60">
    <property type="entry name" value="FAD/NAD(P)-binding domain"/>
    <property type="match status" value="2"/>
</dbReference>
<dbReference type="Gene3D" id="3.40.50.150">
    <property type="entry name" value="Vaccinia Virus protein VP39"/>
    <property type="match status" value="1"/>
</dbReference>
<dbReference type="HAMAP" id="MF_01102">
    <property type="entry name" value="MnmC"/>
    <property type="match status" value="1"/>
</dbReference>
<dbReference type="InterPro" id="IPR006076">
    <property type="entry name" value="FAD-dep_OxRdtase"/>
</dbReference>
<dbReference type="InterPro" id="IPR036188">
    <property type="entry name" value="FAD/NAD-bd_sf"/>
</dbReference>
<dbReference type="InterPro" id="IPR008471">
    <property type="entry name" value="MnmC-like_methylTransf"/>
</dbReference>
<dbReference type="InterPro" id="IPR029063">
    <property type="entry name" value="SAM-dependent_MTases_sf"/>
</dbReference>
<dbReference type="InterPro" id="IPR023032">
    <property type="entry name" value="tRNA_MAMT_biosynth_bifunc_MnmC"/>
</dbReference>
<dbReference type="InterPro" id="IPR047785">
    <property type="entry name" value="tRNA_MNMC2"/>
</dbReference>
<dbReference type="NCBIfam" id="NF002481">
    <property type="entry name" value="PRK01747.1-2"/>
    <property type="match status" value="1"/>
</dbReference>
<dbReference type="NCBIfam" id="NF033855">
    <property type="entry name" value="tRNA_MNMC2"/>
    <property type="match status" value="1"/>
</dbReference>
<dbReference type="PANTHER" id="PTHR13847:SF289">
    <property type="entry name" value="GLYCINE OXIDASE"/>
    <property type="match status" value="1"/>
</dbReference>
<dbReference type="PANTHER" id="PTHR13847">
    <property type="entry name" value="SARCOSINE DEHYDROGENASE-RELATED"/>
    <property type="match status" value="1"/>
</dbReference>
<dbReference type="Pfam" id="PF01266">
    <property type="entry name" value="DAO"/>
    <property type="match status" value="1"/>
</dbReference>
<dbReference type="Pfam" id="PF05430">
    <property type="entry name" value="Methyltransf_30"/>
    <property type="match status" value="1"/>
</dbReference>
<dbReference type="SUPFAM" id="SSF51971">
    <property type="entry name" value="Nucleotide-binding domain"/>
    <property type="match status" value="1"/>
</dbReference>
<comment type="function">
    <text evidence="1">Catalyzes the last two steps in the biosynthesis of 5-methylaminomethyl-2-thiouridine (mnm(5)s(2)U) at the wobble position (U34) in tRNA. Catalyzes the FAD-dependent demodification of cmnm(5)s(2)U34 to nm(5)s(2)U34, followed by the transfer of a methyl group from S-adenosyl-L-methionine to nm(5)s(2)U34, to form mnm(5)s(2)U34.</text>
</comment>
<comment type="catalytic activity">
    <reaction evidence="1">
        <text>5-aminomethyl-2-thiouridine(34) in tRNA + S-adenosyl-L-methionine = 5-methylaminomethyl-2-thiouridine(34) in tRNA + S-adenosyl-L-homocysteine + H(+)</text>
        <dbReference type="Rhea" id="RHEA:19569"/>
        <dbReference type="Rhea" id="RHEA-COMP:10195"/>
        <dbReference type="Rhea" id="RHEA-COMP:10197"/>
        <dbReference type="ChEBI" id="CHEBI:15378"/>
        <dbReference type="ChEBI" id="CHEBI:57856"/>
        <dbReference type="ChEBI" id="CHEBI:59789"/>
        <dbReference type="ChEBI" id="CHEBI:74454"/>
        <dbReference type="ChEBI" id="CHEBI:74455"/>
        <dbReference type="EC" id="2.1.1.61"/>
    </reaction>
</comment>
<comment type="cofactor">
    <cofactor evidence="1">
        <name>FAD</name>
        <dbReference type="ChEBI" id="CHEBI:57692"/>
    </cofactor>
</comment>
<comment type="subcellular location">
    <subcellularLocation>
        <location evidence="1">Cytoplasm</location>
    </subcellularLocation>
</comment>
<comment type="similarity">
    <text evidence="1">In the N-terminal section; belongs to the methyltransferase superfamily. tRNA (mnm(5)s(2)U34)-methyltransferase family.</text>
</comment>
<comment type="similarity">
    <text evidence="1">In the C-terminal section; belongs to the DAO family.</text>
</comment>
<protein>
    <recommendedName>
        <fullName evidence="1">tRNA 5-methylaminomethyl-2-thiouridine biosynthesis bifunctional protein MnmC</fullName>
        <shortName evidence="1">tRNA mnm(5)s(2)U biosynthesis bifunctional protein</shortName>
    </recommendedName>
    <domain>
        <recommendedName>
            <fullName evidence="1">tRNA (mnm(5)s(2)U34)-methyltransferase</fullName>
            <ecNumber evidence="1">2.1.1.61</ecNumber>
        </recommendedName>
    </domain>
    <domain>
        <recommendedName>
            <fullName evidence="1">FAD-dependent cmnm(5)s(2)U34 oxidoreductase</fullName>
            <ecNumber evidence="1">1.5.-.-</ecNumber>
        </recommendedName>
    </domain>
</protein>
<reference key="1">
    <citation type="submission" date="2007-07" db="EMBL/GenBank/DDBJ databases">
        <title>Complete genome sequence of Campylobacter hominis ATCC BAA-381, a commensal isolated from the human gastrointestinal tract.</title>
        <authorList>
            <person name="Fouts D.E."/>
            <person name="Mongodin E.F."/>
            <person name="Puiu D."/>
            <person name="Sebastian Y."/>
            <person name="Miller W.G."/>
            <person name="Mandrell R.E."/>
            <person name="Nelson K.E."/>
        </authorList>
    </citation>
    <scope>NUCLEOTIDE SEQUENCE [LARGE SCALE GENOMIC DNA]</scope>
    <source>
        <strain>ATCC BAA-381 / DSM 21671 / CCUG 45161 / LMG 19568 / NCTC 13146 / CH001A</strain>
    </source>
</reference>
<organism>
    <name type="scientific">Campylobacter hominis (strain ATCC BAA-381 / DSM 21671 / CCUG 45161 / LMG 19568 / NCTC 13146 / CH001A)</name>
    <dbReference type="NCBI Taxonomy" id="360107"/>
    <lineage>
        <taxon>Bacteria</taxon>
        <taxon>Pseudomonadati</taxon>
        <taxon>Campylobacterota</taxon>
        <taxon>Epsilonproteobacteria</taxon>
        <taxon>Campylobacterales</taxon>
        <taxon>Campylobacteraceae</taxon>
        <taxon>Campylobacter</taxon>
    </lineage>
</organism>